<proteinExistence type="inferred from homology"/>
<protein>
    <recommendedName>
        <fullName evidence="1">Large ribosomal subunit protein bL32</fullName>
    </recommendedName>
    <alternativeName>
        <fullName evidence="3">50S ribosomal protein L32</fullName>
    </alternativeName>
</protein>
<sequence>MAVQQVKKSRSKRDIRRSHDSLTNPTLSTDKSTGELHLRHHVSPNGFYKGRKVVDTKSED</sequence>
<comment type="similarity">
    <text evidence="1">Belongs to the bacterial ribosomal protein bL32 family.</text>
</comment>
<dbReference type="EMBL" id="AM286280">
    <property type="protein sequence ID" value="CAL09387.1"/>
    <property type="molecule type" value="Genomic_DNA"/>
</dbReference>
<dbReference type="RefSeq" id="WP_003022175.1">
    <property type="nucleotide sequence ID" value="NC_008245.1"/>
</dbReference>
<dbReference type="SMR" id="Q14GM5"/>
<dbReference type="KEGG" id="ftf:FTF1371"/>
<dbReference type="HOGENOM" id="CLU_129084_2_1_6"/>
<dbReference type="GO" id="GO:0015934">
    <property type="term" value="C:large ribosomal subunit"/>
    <property type="evidence" value="ECO:0007669"/>
    <property type="project" value="InterPro"/>
</dbReference>
<dbReference type="GO" id="GO:0003735">
    <property type="term" value="F:structural constituent of ribosome"/>
    <property type="evidence" value="ECO:0007669"/>
    <property type="project" value="InterPro"/>
</dbReference>
<dbReference type="GO" id="GO:0006412">
    <property type="term" value="P:translation"/>
    <property type="evidence" value="ECO:0007669"/>
    <property type="project" value="UniProtKB-UniRule"/>
</dbReference>
<dbReference type="HAMAP" id="MF_00340">
    <property type="entry name" value="Ribosomal_bL32"/>
    <property type="match status" value="1"/>
</dbReference>
<dbReference type="InterPro" id="IPR002677">
    <property type="entry name" value="Ribosomal_bL32"/>
</dbReference>
<dbReference type="InterPro" id="IPR044957">
    <property type="entry name" value="Ribosomal_bL32_bact"/>
</dbReference>
<dbReference type="InterPro" id="IPR011332">
    <property type="entry name" value="Ribosomal_zn-bd"/>
</dbReference>
<dbReference type="NCBIfam" id="TIGR01031">
    <property type="entry name" value="rpmF_bact"/>
    <property type="match status" value="1"/>
</dbReference>
<dbReference type="PANTHER" id="PTHR35534">
    <property type="entry name" value="50S RIBOSOMAL PROTEIN L32"/>
    <property type="match status" value="1"/>
</dbReference>
<dbReference type="PANTHER" id="PTHR35534:SF1">
    <property type="entry name" value="LARGE RIBOSOMAL SUBUNIT PROTEIN BL32"/>
    <property type="match status" value="1"/>
</dbReference>
<dbReference type="Pfam" id="PF01783">
    <property type="entry name" value="Ribosomal_L32p"/>
    <property type="match status" value="1"/>
</dbReference>
<dbReference type="SUPFAM" id="SSF57829">
    <property type="entry name" value="Zn-binding ribosomal proteins"/>
    <property type="match status" value="1"/>
</dbReference>
<reference key="1">
    <citation type="journal article" date="2007" name="PLoS ONE">
        <title>Genome sequencing shows that European isolates of Francisella tularensis subspecies tularensis are almost identical to US laboratory strain Schu S4.</title>
        <authorList>
            <person name="Chaudhuri R.R."/>
            <person name="Ren C.-P."/>
            <person name="Desmond L."/>
            <person name="Vincent G.A."/>
            <person name="Silman N.J."/>
            <person name="Brehm J.K."/>
            <person name="Elmore M.J."/>
            <person name="Hudson M.J."/>
            <person name="Forsman M."/>
            <person name="Isherwood K.E."/>
            <person name="Gurycova D."/>
            <person name="Minton N.P."/>
            <person name="Titball R.W."/>
            <person name="Pallen M.J."/>
            <person name="Vipond R."/>
        </authorList>
    </citation>
    <scope>NUCLEOTIDE SEQUENCE [LARGE SCALE GENOMIC DNA]</scope>
    <source>
        <strain>FSC 198</strain>
    </source>
</reference>
<keyword id="KW-0687">Ribonucleoprotein</keyword>
<keyword id="KW-0689">Ribosomal protein</keyword>
<accession>Q14GM5</accession>
<gene>
    <name evidence="1" type="primary">rpmF</name>
    <name type="ordered locus">FTF1371</name>
</gene>
<name>RL32_FRAT1</name>
<evidence type="ECO:0000255" key="1">
    <source>
        <dbReference type="HAMAP-Rule" id="MF_00340"/>
    </source>
</evidence>
<evidence type="ECO:0000256" key="2">
    <source>
        <dbReference type="SAM" id="MobiDB-lite"/>
    </source>
</evidence>
<evidence type="ECO:0000305" key="3"/>
<feature type="chain" id="PRO_0000296467" description="Large ribosomal subunit protein bL32">
    <location>
        <begin position="1"/>
        <end position="60"/>
    </location>
</feature>
<feature type="region of interest" description="Disordered" evidence="2">
    <location>
        <begin position="1"/>
        <end position="60"/>
    </location>
</feature>
<feature type="compositionally biased region" description="Basic residues" evidence="2">
    <location>
        <begin position="7"/>
        <end position="16"/>
    </location>
</feature>
<feature type="compositionally biased region" description="Polar residues" evidence="2">
    <location>
        <begin position="22"/>
        <end position="31"/>
    </location>
</feature>
<organism>
    <name type="scientific">Francisella tularensis subsp. tularensis (strain FSC 198)</name>
    <dbReference type="NCBI Taxonomy" id="393115"/>
    <lineage>
        <taxon>Bacteria</taxon>
        <taxon>Pseudomonadati</taxon>
        <taxon>Pseudomonadota</taxon>
        <taxon>Gammaproteobacteria</taxon>
        <taxon>Thiotrichales</taxon>
        <taxon>Francisellaceae</taxon>
        <taxon>Francisella</taxon>
    </lineage>
</organism>